<organism>
    <name type="scientific">Proteus mirabilis (strain HI4320)</name>
    <dbReference type="NCBI Taxonomy" id="529507"/>
    <lineage>
        <taxon>Bacteria</taxon>
        <taxon>Pseudomonadati</taxon>
        <taxon>Pseudomonadota</taxon>
        <taxon>Gammaproteobacteria</taxon>
        <taxon>Enterobacterales</taxon>
        <taxon>Morganellaceae</taxon>
        <taxon>Proteus</taxon>
    </lineage>
</organism>
<comment type="function">
    <text evidence="1">This protein is involved in the repair of mismatches in DNA. It is possible that it carries out the mismatch recognition step. This protein has a weak ATPase activity.</text>
</comment>
<comment type="similarity">
    <text evidence="1">Belongs to the DNA mismatch repair MutS family.</text>
</comment>
<proteinExistence type="inferred from homology"/>
<feature type="chain" id="PRO_1000093637" description="DNA mismatch repair protein MutS">
    <location>
        <begin position="1"/>
        <end position="854"/>
    </location>
</feature>
<feature type="binding site" evidence="1">
    <location>
        <begin position="615"/>
        <end position="622"/>
    </location>
    <ligand>
        <name>ATP</name>
        <dbReference type="ChEBI" id="CHEBI:30616"/>
    </ligand>
</feature>
<accession>B4F220</accession>
<evidence type="ECO:0000255" key="1">
    <source>
        <dbReference type="HAMAP-Rule" id="MF_00096"/>
    </source>
</evidence>
<protein>
    <recommendedName>
        <fullName evidence="1">DNA mismatch repair protein MutS</fullName>
    </recommendedName>
</protein>
<dbReference type="EMBL" id="AM942759">
    <property type="protein sequence ID" value="CAR44439.1"/>
    <property type="molecule type" value="Genomic_DNA"/>
</dbReference>
<dbReference type="RefSeq" id="WP_012368294.1">
    <property type="nucleotide sequence ID" value="NC_010554.1"/>
</dbReference>
<dbReference type="SMR" id="B4F220"/>
<dbReference type="EnsemblBacteria" id="CAR44439">
    <property type="protein sequence ID" value="CAR44439"/>
    <property type="gene ID" value="PMI2235"/>
</dbReference>
<dbReference type="GeneID" id="6802723"/>
<dbReference type="KEGG" id="pmr:PMI2235"/>
<dbReference type="PATRIC" id="fig|529507.6.peg.2182"/>
<dbReference type="eggNOG" id="COG0249">
    <property type="taxonomic scope" value="Bacteria"/>
</dbReference>
<dbReference type="HOGENOM" id="CLU_002472_4_0_6"/>
<dbReference type="Proteomes" id="UP000008319">
    <property type="component" value="Chromosome"/>
</dbReference>
<dbReference type="GO" id="GO:0005829">
    <property type="term" value="C:cytosol"/>
    <property type="evidence" value="ECO:0007669"/>
    <property type="project" value="TreeGrafter"/>
</dbReference>
<dbReference type="GO" id="GO:0005524">
    <property type="term" value="F:ATP binding"/>
    <property type="evidence" value="ECO:0007669"/>
    <property type="project" value="UniProtKB-UniRule"/>
</dbReference>
<dbReference type="GO" id="GO:0140664">
    <property type="term" value="F:ATP-dependent DNA damage sensor activity"/>
    <property type="evidence" value="ECO:0007669"/>
    <property type="project" value="InterPro"/>
</dbReference>
<dbReference type="GO" id="GO:0003684">
    <property type="term" value="F:damaged DNA binding"/>
    <property type="evidence" value="ECO:0007669"/>
    <property type="project" value="UniProtKB-UniRule"/>
</dbReference>
<dbReference type="GO" id="GO:0030983">
    <property type="term" value="F:mismatched DNA binding"/>
    <property type="evidence" value="ECO:0007669"/>
    <property type="project" value="InterPro"/>
</dbReference>
<dbReference type="GO" id="GO:0006298">
    <property type="term" value="P:mismatch repair"/>
    <property type="evidence" value="ECO:0007669"/>
    <property type="project" value="UniProtKB-UniRule"/>
</dbReference>
<dbReference type="CDD" id="cd03284">
    <property type="entry name" value="ABC_MutS1"/>
    <property type="match status" value="1"/>
</dbReference>
<dbReference type="FunFam" id="1.10.1420.10:FF:000002">
    <property type="entry name" value="DNA mismatch repair protein MutS"/>
    <property type="match status" value="1"/>
</dbReference>
<dbReference type="FunFam" id="3.30.420.110:FF:000001">
    <property type="entry name" value="DNA mismatch repair protein MutS"/>
    <property type="match status" value="1"/>
</dbReference>
<dbReference type="FunFam" id="3.40.1170.10:FF:000001">
    <property type="entry name" value="DNA mismatch repair protein MutS"/>
    <property type="match status" value="1"/>
</dbReference>
<dbReference type="FunFam" id="3.40.50.300:FF:000283">
    <property type="entry name" value="DNA mismatch repair protein MutS"/>
    <property type="match status" value="1"/>
</dbReference>
<dbReference type="Gene3D" id="1.10.1420.10">
    <property type="match status" value="2"/>
</dbReference>
<dbReference type="Gene3D" id="6.10.140.430">
    <property type="match status" value="1"/>
</dbReference>
<dbReference type="Gene3D" id="3.40.1170.10">
    <property type="entry name" value="DNA repair protein MutS, domain I"/>
    <property type="match status" value="1"/>
</dbReference>
<dbReference type="Gene3D" id="3.30.420.110">
    <property type="entry name" value="MutS, connector domain"/>
    <property type="match status" value="1"/>
</dbReference>
<dbReference type="Gene3D" id="3.40.50.300">
    <property type="entry name" value="P-loop containing nucleotide triphosphate hydrolases"/>
    <property type="match status" value="1"/>
</dbReference>
<dbReference type="HAMAP" id="MF_00096">
    <property type="entry name" value="MutS"/>
    <property type="match status" value="1"/>
</dbReference>
<dbReference type="InterPro" id="IPR005748">
    <property type="entry name" value="DNA_mismatch_repair_MutS"/>
</dbReference>
<dbReference type="InterPro" id="IPR007695">
    <property type="entry name" value="DNA_mismatch_repair_MutS-lik_N"/>
</dbReference>
<dbReference type="InterPro" id="IPR017261">
    <property type="entry name" value="DNA_mismatch_repair_MutS/MSH"/>
</dbReference>
<dbReference type="InterPro" id="IPR000432">
    <property type="entry name" value="DNA_mismatch_repair_MutS_C"/>
</dbReference>
<dbReference type="InterPro" id="IPR007861">
    <property type="entry name" value="DNA_mismatch_repair_MutS_clamp"/>
</dbReference>
<dbReference type="InterPro" id="IPR007696">
    <property type="entry name" value="DNA_mismatch_repair_MutS_core"/>
</dbReference>
<dbReference type="InterPro" id="IPR016151">
    <property type="entry name" value="DNA_mismatch_repair_MutS_N"/>
</dbReference>
<dbReference type="InterPro" id="IPR036187">
    <property type="entry name" value="DNA_mismatch_repair_MutS_sf"/>
</dbReference>
<dbReference type="InterPro" id="IPR007860">
    <property type="entry name" value="DNA_mmatch_repair_MutS_con_dom"/>
</dbReference>
<dbReference type="InterPro" id="IPR045076">
    <property type="entry name" value="MutS"/>
</dbReference>
<dbReference type="InterPro" id="IPR036678">
    <property type="entry name" value="MutS_con_dom_sf"/>
</dbReference>
<dbReference type="InterPro" id="IPR027417">
    <property type="entry name" value="P-loop_NTPase"/>
</dbReference>
<dbReference type="NCBIfam" id="TIGR01070">
    <property type="entry name" value="mutS1"/>
    <property type="match status" value="1"/>
</dbReference>
<dbReference type="NCBIfam" id="NF003810">
    <property type="entry name" value="PRK05399.1"/>
    <property type="match status" value="1"/>
</dbReference>
<dbReference type="PANTHER" id="PTHR11361:SF34">
    <property type="entry name" value="DNA MISMATCH REPAIR PROTEIN MSH1, MITOCHONDRIAL"/>
    <property type="match status" value="1"/>
</dbReference>
<dbReference type="PANTHER" id="PTHR11361">
    <property type="entry name" value="DNA MISMATCH REPAIR PROTEIN MUTS FAMILY MEMBER"/>
    <property type="match status" value="1"/>
</dbReference>
<dbReference type="Pfam" id="PF01624">
    <property type="entry name" value="MutS_I"/>
    <property type="match status" value="1"/>
</dbReference>
<dbReference type="Pfam" id="PF05188">
    <property type="entry name" value="MutS_II"/>
    <property type="match status" value="1"/>
</dbReference>
<dbReference type="Pfam" id="PF05192">
    <property type="entry name" value="MutS_III"/>
    <property type="match status" value="1"/>
</dbReference>
<dbReference type="Pfam" id="PF05190">
    <property type="entry name" value="MutS_IV"/>
    <property type="match status" value="1"/>
</dbReference>
<dbReference type="Pfam" id="PF00488">
    <property type="entry name" value="MutS_V"/>
    <property type="match status" value="1"/>
</dbReference>
<dbReference type="PIRSF" id="PIRSF037677">
    <property type="entry name" value="DNA_mis_repair_Msh6"/>
    <property type="match status" value="1"/>
</dbReference>
<dbReference type="SMART" id="SM00534">
    <property type="entry name" value="MUTSac"/>
    <property type="match status" value="1"/>
</dbReference>
<dbReference type="SMART" id="SM00533">
    <property type="entry name" value="MUTSd"/>
    <property type="match status" value="1"/>
</dbReference>
<dbReference type="SUPFAM" id="SSF55271">
    <property type="entry name" value="DNA repair protein MutS, domain I"/>
    <property type="match status" value="1"/>
</dbReference>
<dbReference type="SUPFAM" id="SSF53150">
    <property type="entry name" value="DNA repair protein MutS, domain II"/>
    <property type="match status" value="1"/>
</dbReference>
<dbReference type="SUPFAM" id="SSF48334">
    <property type="entry name" value="DNA repair protein MutS, domain III"/>
    <property type="match status" value="1"/>
</dbReference>
<dbReference type="SUPFAM" id="SSF52540">
    <property type="entry name" value="P-loop containing nucleoside triphosphate hydrolases"/>
    <property type="match status" value="1"/>
</dbReference>
<dbReference type="PROSITE" id="PS00486">
    <property type="entry name" value="DNA_MISMATCH_REPAIR_2"/>
    <property type="match status" value="1"/>
</dbReference>
<sequence length="854" mass="95738">MTDSQNFESHTPMMQQYLKLKAEHPEILLFYRMGDFYELFFDDAKKASRLLDISLTKRGQSAGQPIPMAGVPHHAVENYLAKLVQLGESVAICEQIGDPATSKGPVERKVIRIVTPGTVTDEALLEERQDNLLAAIWQDKNGAFGYATLDITSGRFRVTEMPDSESMAAELQRTHPAELLYPETFESMALIERQQGLRRRPIWEFECETAKQQLNLQFGTRDLTGFGVENARLALCAAGCLLQYVKDTQRTGLPHIRSITMERPQDTIILDAATRRNLELTQNLAGGCDNTLASVLDLCVTPMGSRMLKRWIHTPLRQREQLIKRQDAISALQPLYFELQPFLRQVGDLERVLARLALRSARPRDLSRMRHAFQQYQDIHQVLDQADMPYIKELQQRISQFDELRELLENAIVETPPVLVRDGGVIASGYNAELDEWRALADGASDYLEKLEVREREKWGIDTLKVGFNGVHGYYIQVSRGQSNLVPMHYVRRQTLKNAERYIIPELKEYEDKVLTSKGKALAIEKMLYEELFEKLLPHLTALQTSAEALAETDVLANLAERAESLNYTRPELTEKTGIQITGGRHPVVEQVLSEPFISNPLQLAPQRRLLIITGPNMGGKSTYMRQAALITLLAYIGSFVPAEKAVIGPIDRIFTRVGASDDLASGRSTFMVEMTETANILHNATENSLVLMDEIGRGTSTYDGLSLAWACAENLANRIKAMTLFATHYFELTTLPEKLEGTANIHLDAVEHGETIAFMHSVQEGAASKSYGLAVAALAGVPKEVIRRAKQKLKELETLSGHSGASHVETSQLMLLADIEPSEVELALNKIDPDSLTPKQALELLYHLKELNK</sequence>
<gene>
    <name evidence="1" type="primary">mutS</name>
    <name type="ordered locus">PMI2235</name>
</gene>
<name>MUTS_PROMH</name>
<reference key="1">
    <citation type="journal article" date="2008" name="J. Bacteriol.">
        <title>Complete genome sequence of uropathogenic Proteus mirabilis, a master of both adherence and motility.</title>
        <authorList>
            <person name="Pearson M.M."/>
            <person name="Sebaihia M."/>
            <person name="Churcher C."/>
            <person name="Quail M.A."/>
            <person name="Seshasayee A.S."/>
            <person name="Luscombe N.M."/>
            <person name="Abdellah Z."/>
            <person name="Arrosmith C."/>
            <person name="Atkin B."/>
            <person name="Chillingworth T."/>
            <person name="Hauser H."/>
            <person name="Jagels K."/>
            <person name="Moule S."/>
            <person name="Mungall K."/>
            <person name="Norbertczak H."/>
            <person name="Rabbinowitsch E."/>
            <person name="Walker D."/>
            <person name="Whithead S."/>
            <person name="Thomson N.R."/>
            <person name="Rather P.N."/>
            <person name="Parkhill J."/>
            <person name="Mobley H.L.T."/>
        </authorList>
    </citation>
    <scope>NUCLEOTIDE SEQUENCE [LARGE SCALE GENOMIC DNA]</scope>
    <source>
        <strain>HI4320</strain>
    </source>
</reference>
<keyword id="KW-0067">ATP-binding</keyword>
<keyword id="KW-0227">DNA damage</keyword>
<keyword id="KW-0234">DNA repair</keyword>
<keyword id="KW-0238">DNA-binding</keyword>
<keyword id="KW-0547">Nucleotide-binding</keyword>
<keyword id="KW-1185">Reference proteome</keyword>